<gene>
    <name evidence="1" type="primary">rpsS</name>
    <name type="ordered locus">GFO_2835</name>
</gene>
<dbReference type="EMBL" id="CU207366">
    <property type="protein sequence ID" value="CAL67789.1"/>
    <property type="molecule type" value="Genomic_DNA"/>
</dbReference>
<dbReference type="RefSeq" id="WP_011710692.1">
    <property type="nucleotide sequence ID" value="NC_008571.1"/>
</dbReference>
<dbReference type="SMR" id="A0M594"/>
<dbReference type="STRING" id="411154.GFO_2835"/>
<dbReference type="KEGG" id="gfo:GFO_2835"/>
<dbReference type="eggNOG" id="COG0185">
    <property type="taxonomic scope" value="Bacteria"/>
</dbReference>
<dbReference type="HOGENOM" id="CLU_144911_0_1_10"/>
<dbReference type="OrthoDB" id="9797833at2"/>
<dbReference type="Proteomes" id="UP000000755">
    <property type="component" value="Chromosome"/>
</dbReference>
<dbReference type="GO" id="GO:0005737">
    <property type="term" value="C:cytoplasm"/>
    <property type="evidence" value="ECO:0007669"/>
    <property type="project" value="UniProtKB-ARBA"/>
</dbReference>
<dbReference type="GO" id="GO:0015935">
    <property type="term" value="C:small ribosomal subunit"/>
    <property type="evidence" value="ECO:0007669"/>
    <property type="project" value="InterPro"/>
</dbReference>
<dbReference type="GO" id="GO:0019843">
    <property type="term" value="F:rRNA binding"/>
    <property type="evidence" value="ECO:0007669"/>
    <property type="project" value="UniProtKB-UniRule"/>
</dbReference>
<dbReference type="GO" id="GO:0003735">
    <property type="term" value="F:structural constituent of ribosome"/>
    <property type="evidence" value="ECO:0007669"/>
    <property type="project" value="InterPro"/>
</dbReference>
<dbReference type="GO" id="GO:0000028">
    <property type="term" value="P:ribosomal small subunit assembly"/>
    <property type="evidence" value="ECO:0007669"/>
    <property type="project" value="TreeGrafter"/>
</dbReference>
<dbReference type="GO" id="GO:0006412">
    <property type="term" value="P:translation"/>
    <property type="evidence" value="ECO:0007669"/>
    <property type="project" value="UniProtKB-UniRule"/>
</dbReference>
<dbReference type="FunFam" id="3.30.860.10:FF:000001">
    <property type="entry name" value="30S ribosomal protein S19"/>
    <property type="match status" value="1"/>
</dbReference>
<dbReference type="Gene3D" id="3.30.860.10">
    <property type="entry name" value="30s Ribosomal Protein S19, Chain A"/>
    <property type="match status" value="1"/>
</dbReference>
<dbReference type="HAMAP" id="MF_00531">
    <property type="entry name" value="Ribosomal_uS19"/>
    <property type="match status" value="1"/>
</dbReference>
<dbReference type="InterPro" id="IPR002222">
    <property type="entry name" value="Ribosomal_uS19"/>
</dbReference>
<dbReference type="InterPro" id="IPR005732">
    <property type="entry name" value="Ribosomal_uS19_bac-type"/>
</dbReference>
<dbReference type="InterPro" id="IPR020934">
    <property type="entry name" value="Ribosomal_uS19_CS"/>
</dbReference>
<dbReference type="InterPro" id="IPR023575">
    <property type="entry name" value="Ribosomal_uS19_SF"/>
</dbReference>
<dbReference type="NCBIfam" id="TIGR01050">
    <property type="entry name" value="rpsS_bact"/>
    <property type="match status" value="1"/>
</dbReference>
<dbReference type="PANTHER" id="PTHR11880">
    <property type="entry name" value="RIBOSOMAL PROTEIN S19P FAMILY MEMBER"/>
    <property type="match status" value="1"/>
</dbReference>
<dbReference type="PANTHER" id="PTHR11880:SF8">
    <property type="entry name" value="SMALL RIBOSOMAL SUBUNIT PROTEIN US19M"/>
    <property type="match status" value="1"/>
</dbReference>
<dbReference type="Pfam" id="PF00203">
    <property type="entry name" value="Ribosomal_S19"/>
    <property type="match status" value="1"/>
</dbReference>
<dbReference type="PIRSF" id="PIRSF002144">
    <property type="entry name" value="Ribosomal_S19"/>
    <property type="match status" value="1"/>
</dbReference>
<dbReference type="PRINTS" id="PR00975">
    <property type="entry name" value="RIBOSOMALS19"/>
</dbReference>
<dbReference type="SUPFAM" id="SSF54570">
    <property type="entry name" value="Ribosomal protein S19"/>
    <property type="match status" value="1"/>
</dbReference>
<dbReference type="PROSITE" id="PS00323">
    <property type="entry name" value="RIBOSOMAL_S19"/>
    <property type="match status" value="1"/>
</dbReference>
<keyword id="KW-0687">Ribonucleoprotein</keyword>
<keyword id="KW-0689">Ribosomal protein</keyword>
<keyword id="KW-0694">RNA-binding</keyword>
<keyword id="KW-0699">rRNA-binding</keyword>
<sequence>MARSLKKGPFVHYKLEQKVAQNVESGKKAVIKTWSRASMITPDFVGQTIAVHNGKQFVPVYVTENMVGHKLGEFSPTRSFRGHAGAKNKGRK</sequence>
<evidence type="ECO:0000255" key="1">
    <source>
        <dbReference type="HAMAP-Rule" id="MF_00531"/>
    </source>
</evidence>
<evidence type="ECO:0000256" key="2">
    <source>
        <dbReference type="SAM" id="MobiDB-lite"/>
    </source>
</evidence>
<evidence type="ECO:0000305" key="3"/>
<reference key="1">
    <citation type="journal article" date="2006" name="Environ. Microbiol.">
        <title>Whole genome analysis of the marine Bacteroidetes'Gramella forsetii' reveals adaptations to degradation of polymeric organic matter.</title>
        <authorList>
            <person name="Bauer M."/>
            <person name="Kube M."/>
            <person name="Teeling H."/>
            <person name="Richter M."/>
            <person name="Lombardot T."/>
            <person name="Allers E."/>
            <person name="Wuerdemann C.A."/>
            <person name="Quast C."/>
            <person name="Kuhl H."/>
            <person name="Knaust F."/>
            <person name="Woebken D."/>
            <person name="Bischof K."/>
            <person name="Mussmann M."/>
            <person name="Choudhuri J.V."/>
            <person name="Meyer F."/>
            <person name="Reinhardt R."/>
            <person name="Amann R.I."/>
            <person name="Gloeckner F.O."/>
        </authorList>
    </citation>
    <scope>NUCLEOTIDE SEQUENCE [LARGE SCALE GENOMIC DNA]</scope>
    <source>
        <strain>DSM 17595 / CGMCC 1.15422 / KT0803</strain>
    </source>
</reference>
<comment type="function">
    <text evidence="1">Protein S19 forms a complex with S13 that binds strongly to the 16S ribosomal RNA.</text>
</comment>
<comment type="similarity">
    <text evidence="1">Belongs to the universal ribosomal protein uS19 family.</text>
</comment>
<protein>
    <recommendedName>
        <fullName evidence="1">Small ribosomal subunit protein uS19</fullName>
    </recommendedName>
    <alternativeName>
        <fullName evidence="3">30S ribosomal protein S19</fullName>
    </alternativeName>
</protein>
<proteinExistence type="inferred from homology"/>
<name>RS19_CHRFK</name>
<accession>A0M594</accession>
<feature type="chain" id="PRO_1000051054" description="Small ribosomal subunit protein uS19">
    <location>
        <begin position="1"/>
        <end position="92"/>
    </location>
</feature>
<feature type="region of interest" description="Disordered" evidence="2">
    <location>
        <begin position="73"/>
        <end position="92"/>
    </location>
</feature>
<feature type="compositionally biased region" description="Basic residues" evidence="2">
    <location>
        <begin position="80"/>
        <end position="92"/>
    </location>
</feature>
<organism>
    <name type="scientific">Christiangramia forsetii (strain DSM 17595 / CGMCC 1.15422 / KT0803)</name>
    <name type="common">Gramella forsetii</name>
    <dbReference type="NCBI Taxonomy" id="411154"/>
    <lineage>
        <taxon>Bacteria</taxon>
        <taxon>Pseudomonadati</taxon>
        <taxon>Bacteroidota</taxon>
        <taxon>Flavobacteriia</taxon>
        <taxon>Flavobacteriales</taxon>
        <taxon>Flavobacteriaceae</taxon>
        <taxon>Christiangramia</taxon>
    </lineage>
</organism>